<comment type="function">
    <text evidence="1">Catalyzes the deamination of adenosine to inosine at the wobble position 34 of tRNA(Arg2).</text>
</comment>
<comment type="catalytic activity">
    <reaction evidence="1">
        <text>adenosine(34) in tRNA + H2O + H(+) = inosine(34) in tRNA + NH4(+)</text>
        <dbReference type="Rhea" id="RHEA:43168"/>
        <dbReference type="Rhea" id="RHEA-COMP:10373"/>
        <dbReference type="Rhea" id="RHEA-COMP:10374"/>
        <dbReference type="ChEBI" id="CHEBI:15377"/>
        <dbReference type="ChEBI" id="CHEBI:15378"/>
        <dbReference type="ChEBI" id="CHEBI:28938"/>
        <dbReference type="ChEBI" id="CHEBI:74411"/>
        <dbReference type="ChEBI" id="CHEBI:82852"/>
        <dbReference type="EC" id="3.5.4.33"/>
    </reaction>
</comment>
<comment type="cofactor">
    <cofactor evidence="1">
        <name>Zn(2+)</name>
        <dbReference type="ChEBI" id="CHEBI:29105"/>
    </cofactor>
    <text evidence="1">Binds 1 zinc ion per subunit.</text>
</comment>
<comment type="subunit">
    <text evidence="1">Homodimer.</text>
</comment>
<comment type="similarity">
    <text evidence="1">Belongs to the cytidine and deoxycytidylate deaminase family.</text>
</comment>
<comment type="sequence caution" evidence="3">
    <conflict type="erroneous initiation">
        <sequence resource="EMBL-CDS" id="AAN81531"/>
    </conflict>
    <text>Extended N-terminus.</text>
</comment>
<organism>
    <name type="scientific">Escherichia coli O6:H1 (strain CFT073 / ATCC 700928 / UPEC)</name>
    <dbReference type="NCBI Taxonomy" id="199310"/>
    <lineage>
        <taxon>Bacteria</taxon>
        <taxon>Pseudomonadati</taxon>
        <taxon>Pseudomonadota</taxon>
        <taxon>Gammaproteobacteria</taxon>
        <taxon>Enterobacterales</taxon>
        <taxon>Enterobacteriaceae</taxon>
        <taxon>Escherichia</taxon>
    </lineage>
</organism>
<name>TADA_ECOL6</name>
<dbReference type="EC" id="3.5.4.33" evidence="1"/>
<dbReference type="EMBL" id="AE014075">
    <property type="protein sequence ID" value="AAN81531.1"/>
    <property type="status" value="ALT_INIT"/>
    <property type="molecule type" value="Genomic_DNA"/>
</dbReference>
<dbReference type="RefSeq" id="WP_001301544.1">
    <property type="nucleotide sequence ID" value="NZ_CP051263.1"/>
</dbReference>
<dbReference type="SMR" id="Q8FF24"/>
<dbReference type="STRING" id="199310.c3082"/>
<dbReference type="GeneID" id="75172672"/>
<dbReference type="KEGG" id="ecc:c3082"/>
<dbReference type="eggNOG" id="COG0590">
    <property type="taxonomic scope" value="Bacteria"/>
</dbReference>
<dbReference type="HOGENOM" id="CLU_025810_3_0_6"/>
<dbReference type="Proteomes" id="UP000001410">
    <property type="component" value="Chromosome"/>
</dbReference>
<dbReference type="GO" id="GO:0052717">
    <property type="term" value="F:tRNA-specific adenosine-34 deaminase activity"/>
    <property type="evidence" value="ECO:0007669"/>
    <property type="project" value="UniProtKB-UniRule"/>
</dbReference>
<dbReference type="GO" id="GO:0008270">
    <property type="term" value="F:zinc ion binding"/>
    <property type="evidence" value="ECO:0007669"/>
    <property type="project" value="UniProtKB-UniRule"/>
</dbReference>
<dbReference type="GO" id="GO:0002100">
    <property type="term" value="P:tRNA wobble adenosine to inosine editing"/>
    <property type="evidence" value="ECO:0007669"/>
    <property type="project" value="UniProtKB-UniRule"/>
</dbReference>
<dbReference type="CDD" id="cd01285">
    <property type="entry name" value="nucleoside_deaminase"/>
    <property type="match status" value="1"/>
</dbReference>
<dbReference type="FunFam" id="3.40.140.10:FF:000005">
    <property type="entry name" value="tRNA-specific adenosine deaminase"/>
    <property type="match status" value="1"/>
</dbReference>
<dbReference type="Gene3D" id="3.40.140.10">
    <property type="entry name" value="Cytidine Deaminase, domain 2"/>
    <property type="match status" value="1"/>
</dbReference>
<dbReference type="HAMAP" id="MF_00972">
    <property type="entry name" value="tRNA_aden_deaminase"/>
    <property type="match status" value="1"/>
</dbReference>
<dbReference type="InterPro" id="IPR016192">
    <property type="entry name" value="APOBEC/CMP_deaminase_Zn-bd"/>
</dbReference>
<dbReference type="InterPro" id="IPR002125">
    <property type="entry name" value="CMP_dCMP_dom"/>
</dbReference>
<dbReference type="InterPro" id="IPR016193">
    <property type="entry name" value="Cytidine_deaminase-like"/>
</dbReference>
<dbReference type="InterPro" id="IPR028883">
    <property type="entry name" value="tRNA_aden_deaminase"/>
</dbReference>
<dbReference type="NCBIfam" id="NF008113">
    <property type="entry name" value="PRK10860.1"/>
    <property type="match status" value="1"/>
</dbReference>
<dbReference type="PANTHER" id="PTHR11079">
    <property type="entry name" value="CYTOSINE DEAMINASE FAMILY MEMBER"/>
    <property type="match status" value="1"/>
</dbReference>
<dbReference type="PANTHER" id="PTHR11079:SF202">
    <property type="entry name" value="TRNA-SPECIFIC ADENOSINE DEAMINASE"/>
    <property type="match status" value="1"/>
</dbReference>
<dbReference type="Pfam" id="PF14437">
    <property type="entry name" value="MafB19-deam"/>
    <property type="match status" value="1"/>
</dbReference>
<dbReference type="SUPFAM" id="SSF53927">
    <property type="entry name" value="Cytidine deaminase-like"/>
    <property type="match status" value="1"/>
</dbReference>
<dbReference type="PROSITE" id="PS00903">
    <property type="entry name" value="CYT_DCMP_DEAMINASES_1"/>
    <property type="match status" value="1"/>
</dbReference>
<dbReference type="PROSITE" id="PS51747">
    <property type="entry name" value="CYT_DCMP_DEAMINASES_2"/>
    <property type="match status" value="1"/>
</dbReference>
<protein>
    <recommendedName>
        <fullName evidence="1">tRNA-specific adenosine deaminase</fullName>
        <ecNumber evidence="1">3.5.4.33</ecNumber>
    </recommendedName>
</protein>
<evidence type="ECO:0000255" key="1">
    <source>
        <dbReference type="HAMAP-Rule" id="MF_00972"/>
    </source>
</evidence>
<evidence type="ECO:0000255" key="2">
    <source>
        <dbReference type="PROSITE-ProRule" id="PRU01083"/>
    </source>
</evidence>
<evidence type="ECO:0000305" key="3"/>
<gene>
    <name evidence="1" type="primary">tadA</name>
    <name type="ordered locus">c3082</name>
</gene>
<reference key="1">
    <citation type="journal article" date="2002" name="Proc. Natl. Acad. Sci. U.S.A.">
        <title>Extensive mosaic structure revealed by the complete genome sequence of uropathogenic Escherichia coli.</title>
        <authorList>
            <person name="Welch R.A."/>
            <person name="Burland V."/>
            <person name="Plunkett G. III"/>
            <person name="Redford P."/>
            <person name="Roesch P."/>
            <person name="Rasko D."/>
            <person name="Buckles E.L."/>
            <person name="Liou S.-R."/>
            <person name="Boutin A."/>
            <person name="Hackett J."/>
            <person name="Stroud D."/>
            <person name="Mayhew G.F."/>
            <person name="Rose D.J."/>
            <person name="Zhou S."/>
            <person name="Schwartz D.C."/>
            <person name="Perna N.T."/>
            <person name="Mobley H.L.T."/>
            <person name="Donnenberg M.S."/>
            <person name="Blattner F.R."/>
        </authorList>
    </citation>
    <scope>NUCLEOTIDE SEQUENCE [LARGE SCALE GENOMIC DNA]</scope>
    <source>
        <strain>CFT073 / ATCC 700928 / UPEC</strain>
    </source>
</reference>
<accession>Q8FF24</accession>
<proteinExistence type="inferred from homology"/>
<feature type="chain" id="PRO_0000171735" description="tRNA-specific adenosine deaminase">
    <location>
        <begin position="1"/>
        <end position="167"/>
    </location>
</feature>
<feature type="domain" description="CMP/dCMP-type deaminase" evidence="2">
    <location>
        <begin position="6"/>
        <end position="117"/>
    </location>
</feature>
<feature type="active site" description="Proton donor" evidence="1">
    <location>
        <position position="59"/>
    </location>
</feature>
<feature type="binding site" evidence="1">
    <location>
        <position position="57"/>
    </location>
    <ligand>
        <name>Zn(2+)</name>
        <dbReference type="ChEBI" id="CHEBI:29105"/>
        <note>catalytic</note>
    </ligand>
</feature>
<feature type="binding site" evidence="1">
    <location>
        <position position="87"/>
    </location>
    <ligand>
        <name>Zn(2+)</name>
        <dbReference type="ChEBI" id="CHEBI:29105"/>
        <note>catalytic</note>
    </ligand>
</feature>
<feature type="binding site" evidence="1">
    <location>
        <position position="90"/>
    </location>
    <ligand>
        <name>Zn(2+)</name>
        <dbReference type="ChEBI" id="CHEBI:29105"/>
        <note>catalytic</note>
    </ligand>
</feature>
<sequence length="167" mass="18736">MSEVEFSHEYWMRHAMTLAKRAWDEREVPVGAVLVHNNRVIGEGWNRPIGRHDPTAHAEIMALRQGGLVMQNYRLIDATLYVTLEPCVMCAGAMIHSRIGRVVFGARDAKTGAAGSLMDVLHHPGMNHRVEITEGILADECAALLSDFFRMRRQEIKAQKKAQSSTD</sequence>
<keyword id="KW-0378">Hydrolase</keyword>
<keyword id="KW-0479">Metal-binding</keyword>
<keyword id="KW-1185">Reference proteome</keyword>
<keyword id="KW-0819">tRNA processing</keyword>
<keyword id="KW-0862">Zinc</keyword>